<keyword id="KW-0627">Porphyrin biosynthesis</keyword>
<keyword id="KW-0808">Transferase</keyword>
<organism>
    <name type="scientific">Clostridium botulinum (strain Loch Maree / Type A3)</name>
    <dbReference type="NCBI Taxonomy" id="498214"/>
    <lineage>
        <taxon>Bacteria</taxon>
        <taxon>Bacillati</taxon>
        <taxon>Bacillota</taxon>
        <taxon>Clostridia</taxon>
        <taxon>Eubacteriales</taxon>
        <taxon>Clostridiaceae</taxon>
        <taxon>Clostridium</taxon>
    </lineage>
</organism>
<gene>
    <name evidence="1" type="primary">hemC</name>
    <name type="ordered locus">CLK_0358</name>
</gene>
<accession>B1KY15</accession>
<protein>
    <recommendedName>
        <fullName evidence="1">Porphobilinogen deaminase</fullName>
        <shortName evidence="1">PBG</shortName>
        <ecNumber evidence="1">2.5.1.61</ecNumber>
    </recommendedName>
    <alternativeName>
        <fullName evidence="1">Hydroxymethylbilane synthase</fullName>
        <shortName evidence="1">HMBS</shortName>
    </alternativeName>
    <alternativeName>
        <fullName evidence="1">Pre-uroporphyrinogen synthase</fullName>
    </alternativeName>
</protein>
<name>HEM3_CLOBM</name>
<comment type="function">
    <text evidence="1">Tetrapolymerization of the monopyrrole PBG into the hydroxymethylbilane pre-uroporphyrinogen in several discrete steps.</text>
</comment>
<comment type="catalytic activity">
    <reaction evidence="1">
        <text>4 porphobilinogen + H2O = hydroxymethylbilane + 4 NH4(+)</text>
        <dbReference type="Rhea" id="RHEA:13185"/>
        <dbReference type="ChEBI" id="CHEBI:15377"/>
        <dbReference type="ChEBI" id="CHEBI:28938"/>
        <dbReference type="ChEBI" id="CHEBI:57845"/>
        <dbReference type="ChEBI" id="CHEBI:58126"/>
        <dbReference type="EC" id="2.5.1.61"/>
    </reaction>
</comment>
<comment type="cofactor">
    <cofactor evidence="1">
        <name>dipyrromethane</name>
        <dbReference type="ChEBI" id="CHEBI:60342"/>
    </cofactor>
    <text evidence="1">Binds 1 dipyrromethane group covalently.</text>
</comment>
<comment type="pathway">
    <text evidence="1">Porphyrin-containing compound metabolism; protoporphyrin-IX biosynthesis; coproporphyrinogen-III from 5-aminolevulinate: step 2/4.</text>
</comment>
<comment type="subunit">
    <text evidence="1">Monomer.</text>
</comment>
<comment type="miscellaneous">
    <text evidence="1">The porphobilinogen subunits are added to the dipyrromethane group.</text>
</comment>
<comment type="similarity">
    <text evidence="1">Belongs to the HMBS family.</text>
</comment>
<dbReference type="EC" id="2.5.1.61" evidence="1"/>
<dbReference type="EMBL" id="CP000962">
    <property type="protein sequence ID" value="ACA54933.1"/>
    <property type="molecule type" value="Genomic_DNA"/>
</dbReference>
<dbReference type="RefSeq" id="WP_012342973.1">
    <property type="nucleotide sequence ID" value="NC_010520.1"/>
</dbReference>
<dbReference type="SMR" id="B1KY15"/>
<dbReference type="KEGG" id="cbl:CLK_0358"/>
<dbReference type="HOGENOM" id="CLU_019704_0_2_9"/>
<dbReference type="UniPathway" id="UPA00251">
    <property type="reaction ID" value="UER00319"/>
</dbReference>
<dbReference type="GO" id="GO:0005737">
    <property type="term" value="C:cytoplasm"/>
    <property type="evidence" value="ECO:0007669"/>
    <property type="project" value="TreeGrafter"/>
</dbReference>
<dbReference type="GO" id="GO:0004418">
    <property type="term" value="F:hydroxymethylbilane synthase activity"/>
    <property type="evidence" value="ECO:0007669"/>
    <property type="project" value="UniProtKB-UniRule"/>
</dbReference>
<dbReference type="GO" id="GO:0006782">
    <property type="term" value="P:protoporphyrinogen IX biosynthetic process"/>
    <property type="evidence" value="ECO:0007669"/>
    <property type="project" value="UniProtKB-UniRule"/>
</dbReference>
<dbReference type="FunFam" id="3.40.190.10:FF:000005">
    <property type="entry name" value="Porphobilinogen deaminase"/>
    <property type="match status" value="1"/>
</dbReference>
<dbReference type="Gene3D" id="3.40.190.10">
    <property type="entry name" value="Periplasmic binding protein-like II"/>
    <property type="match status" value="2"/>
</dbReference>
<dbReference type="Gene3D" id="3.30.160.40">
    <property type="entry name" value="Porphobilinogen deaminase, C-terminal domain"/>
    <property type="match status" value="1"/>
</dbReference>
<dbReference type="HAMAP" id="MF_00260">
    <property type="entry name" value="Porphobil_deam"/>
    <property type="match status" value="1"/>
</dbReference>
<dbReference type="InterPro" id="IPR000860">
    <property type="entry name" value="HemC"/>
</dbReference>
<dbReference type="InterPro" id="IPR022417">
    <property type="entry name" value="Porphobilin_deaminase_N"/>
</dbReference>
<dbReference type="InterPro" id="IPR022418">
    <property type="entry name" value="Porphobilinogen_deaminase_C"/>
</dbReference>
<dbReference type="InterPro" id="IPR036803">
    <property type="entry name" value="Porphobilinogen_deaminase_C_sf"/>
</dbReference>
<dbReference type="NCBIfam" id="TIGR00212">
    <property type="entry name" value="hemC"/>
    <property type="match status" value="1"/>
</dbReference>
<dbReference type="PANTHER" id="PTHR11557">
    <property type="entry name" value="PORPHOBILINOGEN DEAMINASE"/>
    <property type="match status" value="1"/>
</dbReference>
<dbReference type="PANTHER" id="PTHR11557:SF0">
    <property type="entry name" value="PORPHOBILINOGEN DEAMINASE"/>
    <property type="match status" value="1"/>
</dbReference>
<dbReference type="Pfam" id="PF01379">
    <property type="entry name" value="Porphobil_deam"/>
    <property type="match status" value="1"/>
</dbReference>
<dbReference type="Pfam" id="PF03900">
    <property type="entry name" value="Porphobil_deamC"/>
    <property type="match status" value="1"/>
</dbReference>
<dbReference type="PIRSF" id="PIRSF001438">
    <property type="entry name" value="4pyrrol_synth_OHMeBilane_synth"/>
    <property type="match status" value="1"/>
</dbReference>
<dbReference type="PRINTS" id="PR00151">
    <property type="entry name" value="PORPHBDMNASE"/>
</dbReference>
<dbReference type="SUPFAM" id="SSF53850">
    <property type="entry name" value="Periplasmic binding protein-like II"/>
    <property type="match status" value="1"/>
</dbReference>
<dbReference type="SUPFAM" id="SSF54782">
    <property type="entry name" value="Porphobilinogen deaminase (hydroxymethylbilane synthase), C-terminal domain"/>
    <property type="match status" value="1"/>
</dbReference>
<evidence type="ECO:0000255" key="1">
    <source>
        <dbReference type="HAMAP-Rule" id="MF_00260"/>
    </source>
</evidence>
<proteinExistence type="inferred from homology"/>
<feature type="chain" id="PRO_1000114145" description="Porphobilinogen deaminase">
    <location>
        <begin position="1"/>
        <end position="290"/>
    </location>
</feature>
<feature type="modified residue" description="S-(dipyrrolylmethanemethyl)cysteine" evidence="1">
    <location>
        <position position="237"/>
    </location>
</feature>
<sequence>MNFIIATRRSKLAQVQTEIIIDLLNKKHDIECEKLLIETVGDKILEVSLDKIGGKGLFVKDIEVAMLEQRADAAVHSMKDVPYEMPKGFEIIAIPEREDVRDAFISLDNIKFKDLREGAKIGTSSRRRAAQLKLLRPDLDIVPIRGNVQTRIEKIKKENLDGIILAVAGLKRVNLDHLITDYFDTKEMVPAIGQGALGIEVMEEHPKKELFKDLDHYNSKICVLAERAFMRELDGDCHSTIGAYASIKDNIMHIIGIFERKNKIVKKEITGTKDQYEKLGIALAEHILKD</sequence>
<reference key="1">
    <citation type="journal article" date="2007" name="PLoS ONE">
        <title>Analysis of the neurotoxin complex genes in Clostridium botulinum A1-A4 and B1 strains: BoNT/A3, /Ba4 and /B1 clusters are located within plasmids.</title>
        <authorList>
            <person name="Smith T.J."/>
            <person name="Hill K.K."/>
            <person name="Foley B.T."/>
            <person name="Detter J.C."/>
            <person name="Munk A.C."/>
            <person name="Bruce D.C."/>
            <person name="Doggett N.A."/>
            <person name="Smith L.A."/>
            <person name="Marks J.D."/>
            <person name="Xie G."/>
            <person name="Brettin T.S."/>
        </authorList>
    </citation>
    <scope>NUCLEOTIDE SEQUENCE [LARGE SCALE GENOMIC DNA]</scope>
    <source>
        <strain>Loch Maree / Type A3</strain>
    </source>
</reference>